<accession>B3R2D1</accession>
<feature type="chain" id="PRO_0000375539" description="Succinyl-diaminopimelate desuccinylase">
    <location>
        <begin position="1"/>
        <end position="383"/>
    </location>
</feature>
<feature type="active site" evidence="1">
    <location>
        <position position="76"/>
    </location>
</feature>
<feature type="active site" description="Proton acceptor" evidence="1">
    <location>
        <position position="141"/>
    </location>
</feature>
<feature type="binding site" evidence="1">
    <location>
        <position position="74"/>
    </location>
    <ligand>
        <name>Zn(2+)</name>
        <dbReference type="ChEBI" id="CHEBI:29105"/>
        <label>1</label>
    </ligand>
</feature>
<feature type="binding site" evidence="1">
    <location>
        <position position="107"/>
    </location>
    <ligand>
        <name>Zn(2+)</name>
        <dbReference type="ChEBI" id="CHEBI:29105"/>
        <label>1</label>
    </ligand>
</feature>
<feature type="binding site" evidence="1">
    <location>
        <position position="107"/>
    </location>
    <ligand>
        <name>Zn(2+)</name>
        <dbReference type="ChEBI" id="CHEBI:29105"/>
        <label>2</label>
    </ligand>
</feature>
<feature type="binding site" evidence="1">
    <location>
        <position position="142"/>
    </location>
    <ligand>
        <name>Zn(2+)</name>
        <dbReference type="ChEBI" id="CHEBI:29105"/>
        <label>2</label>
    </ligand>
</feature>
<feature type="binding site" evidence="1">
    <location>
        <position position="170"/>
    </location>
    <ligand>
        <name>Zn(2+)</name>
        <dbReference type="ChEBI" id="CHEBI:29105"/>
        <label>1</label>
    </ligand>
</feature>
<feature type="binding site" evidence="1">
    <location>
        <position position="356"/>
    </location>
    <ligand>
        <name>Zn(2+)</name>
        <dbReference type="ChEBI" id="CHEBI:29105"/>
        <label>2</label>
    </ligand>
</feature>
<keyword id="KW-0028">Amino-acid biosynthesis</keyword>
<keyword id="KW-0170">Cobalt</keyword>
<keyword id="KW-0220">Diaminopimelate biosynthesis</keyword>
<keyword id="KW-0378">Hydrolase</keyword>
<keyword id="KW-0457">Lysine biosynthesis</keyword>
<keyword id="KW-0479">Metal-binding</keyword>
<keyword id="KW-0862">Zinc</keyword>
<reference key="1">
    <citation type="journal article" date="2008" name="Genome Res.">
        <title>Genome sequence of the beta-rhizobium Cupriavidus taiwanensis and comparative genomics of rhizobia.</title>
        <authorList>
            <person name="Amadou C."/>
            <person name="Pascal G."/>
            <person name="Mangenot S."/>
            <person name="Glew M."/>
            <person name="Bontemps C."/>
            <person name="Capela D."/>
            <person name="Carrere S."/>
            <person name="Cruveiller S."/>
            <person name="Dossat C."/>
            <person name="Lajus A."/>
            <person name="Marchetti M."/>
            <person name="Poinsot V."/>
            <person name="Rouy Z."/>
            <person name="Servin B."/>
            <person name="Saad M."/>
            <person name="Schenowitz C."/>
            <person name="Barbe V."/>
            <person name="Batut J."/>
            <person name="Medigue C."/>
            <person name="Masson-Boivin C."/>
        </authorList>
    </citation>
    <scope>NUCLEOTIDE SEQUENCE [LARGE SCALE GENOMIC DNA]</scope>
    <source>
        <strain>DSM 17343 / BCRC 17206 / CCUG 44338 / CIP 107171 / LMG 19424 / R1</strain>
    </source>
</reference>
<comment type="function">
    <text evidence="1">Catalyzes the hydrolysis of N-succinyl-L,L-diaminopimelic acid (SDAP), forming succinate and LL-2,6-diaminopimelate (DAP), an intermediate involved in the bacterial biosynthesis of lysine and meso-diaminopimelic acid, an essential component of bacterial cell walls.</text>
</comment>
<comment type="catalytic activity">
    <reaction evidence="1">
        <text>N-succinyl-(2S,6S)-2,6-diaminopimelate + H2O = (2S,6S)-2,6-diaminopimelate + succinate</text>
        <dbReference type="Rhea" id="RHEA:22608"/>
        <dbReference type="ChEBI" id="CHEBI:15377"/>
        <dbReference type="ChEBI" id="CHEBI:30031"/>
        <dbReference type="ChEBI" id="CHEBI:57609"/>
        <dbReference type="ChEBI" id="CHEBI:58087"/>
        <dbReference type="EC" id="3.5.1.18"/>
    </reaction>
</comment>
<comment type="cofactor">
    <cofactor evidence="1">
        <name>Zn(2+)</name>
        <dbReference type="ChEBI" id="CHEBI:29105"/>
    </cofactor>
    <cofactor evidence="1">
        <name>Co(2+)</name>
        <dbReference type="ChEBI" id="CHEBI:48828"/>
    </cofactor>
    <text evidence="1">Binds 2 Zn(2+) or Co(2+) ions per subunit.</text>
</comment>
<comment type="pathway">
    <text evidence="1">Amino-acid biosynthesis; L-lysine biosynthesis via DAP pathway; LL-2,6-diaminopimelate from (S)-tetrahydrodipicolinate (succinylase route): step 3/3.</text>
</comment>
<comment type="subunit">
    <text evidence="1">Homodimer.</text>
</comment>
<comment type="similarity">
    <text evidence="1">Belongs to the peptidase M20A family. DapE subfamily.</text>
</comment>
<organism>
    <name type="scientific">Cupriavidus taiwanensis (strain DSM 17343 / BCRC 17206 / CCUG 44338 / CIP 107171 / LMG 19424 / R1)</name>
    <name type="common">Ralstonia taiwanensis (strain LMG 19424)</name>
    <dbReference type="NCBI Taxonomy" id="977880"/>
    <lineage>
        <taxon>Bacteria</taxon>
        <taxon>Pseudomonadati</taxon>
        <taxon>Pseudomonadota</taxon>
        <taxon>Betaproteobacteria</taxon>
        <taxon>Burkholderiales</taxon>
        <taxon>Burkholderiaceae</taxon>
        <taxon>Cupriavidus</taxon>
    </lineage>
</organism>
<dbReference type="EC" id="3.5.1.18" evidence="1"/>
<dbReference type="EMBL" id="CU633749">
    <property type="protein sequence ID" value="CAQ69648.1"/>
    <property type="molecule type" value="Genomic_DNA"/>
</dbReference>
<dbReference type="RefSeq" id="WP_012352968.1">
    <property type="nucleotide sequence ID" value="NC_010528.1"/>
</dbReference>
<dbReference type="SMR" id="B3R2D1"/>
<dbReference type="GeneID" id="29761625"/>
<dbReference type="KEGG" id="cti:RALTA_A1705"/>
<dbReference type="eggNOG" id="COG0624">
    <property type="taxonomic scope" value="Bacteria"/>
</dbReference>
<dbReference type="HOGENOM" id="CLU_021802_4_0_4"/>
<dbReference type="BioCyc" id="CTAI977880:RALTA_RS08200-MONOMER"/>
<dbReference type="UniPathway" id="UPA00034">
    <property type="reaction ID" value="UER00021"/>
</dbReference>
<dbReference type="Proteomes" id="UP000001692">
    <property type="component" value="Chromosome 1"/>
</dbReference>
<dbReference type="GO" id="GO:0008777">
    <property type="term" value="F:acetylornithine deacetylase activity"/>
    <property type="evidence" value="ECO:0007669"/>
    <property type="project" value="TreeGrafter"/>
</dbReference>
<dbReference type="GO" id="GO:0050897">
    <property type="term" value="F:cobalt ion binding"/>
    <property type="evidence" value="ECO:0007669"/>
    <property type="project" value="UniProtKB-UniRule"/>
</dbReference>
<dbReference type="GO" id="GO:0009014">
    <property type="term" value="F:succinyl-diaminopimelate desuccinylase activity"/>
    <property type="evidence" value="ECO:0007669"/>
    <property type="project" value="UniProtKB-UniRule"/>
</dbReference>
<dbReference type="GO" id="GO:0008270">
    <property type="term" value="F:zinc ion binding"/>
    <property type="evidence" value="ECO:0007669"/>
    <property type="project" value="UniProtKB-UniRule"/>
</dbReference>
<dbReference type="GO" id="GO:0019877">
    <property type="term" value="P:diaminopimelate biosynthetic process"/>
    <property type="evidence" value="ECO:0007669"/>
    <property type="project" value="UniProtKB-UniRule"/>
</dbReference>
<dbReference type="GO" id="GO:0006526">
    <property type="term" value="P:L-arginine biosynthetic process"/>
    <property type="evidence" value="ECO:0007669"/>
    <property type="project" value="TreeGrafter"/>
</dbReference>
<dbReference type="GO" id="GO:0009089">
    <property type="term" value="P:lysine biosynthetic process via diaminopimelate"/>
    <property type="evidence" value="ECO:0007669"/>
    <property type="project" value="UniProtKB-UniRule"/>
</dbReference>
<dbReference type="CDD" id="cd03891">
    <property type="entry name" value="M20_DapE_proteobac"/>
    <property type="match status" value="1"/>
</dbReference>
<dbReference type="FunFam" id="3.30.70.360:FF:000011">
    <property type="entry name" value="Succinyl-diaminopimelate desuccinylase"/>
    <property type="match status" value="1"/>
</dbReference>
<dbReference type="FunFam" id="3.40.630.10:FF:000005">
    <property type="entry name" value="Succinyl-diaminopimelate desuccinylase"/>
    <property type="match status" value="1"/>
</dbReference>
<dbReference type="Gene3D" id="3.40.630.10">
    <property type="entry name" value="Zn peptidases"/>
    <property type="match status" value="2"/>
</dbReference>
<dbReference type="HAMAP" id="MF_01690">
    <property type="entry name" value="DapE"/>
    <property type="match status" value="1"/>
</dbReference>
<dbReference type="InterPro" id="IPR036264">
    <property type="entry name" value="Bact_exopeptidase_dim_dom"/>
</dbReference>
<dbReference type="InterPro" id="IPR005941">
    <property type="entry name" value="DapE_proteobac"/>
</dbReference>
<dbReference type="InterPro" id="IPR002933">
    <property type="entry name" value="Peptidase_M20"/>
</dbReference>
<dbReference type="InterPro" id="IPR011650">
    <property type="entry name" value="Peptidase_M20_dimer"/>
</dbReference>
<dbReference type="InterPro" id="IPR050072">
    <property type="entry name" value="Peptidase_M20A"/>
</dbReference>
<dbReference type="NCBIfam" id="TIGR01246">
    <property type="entry name" value="dapE_proteo"/>
    <property type="match status" value="1"/>
</dbReference>
<dbReference type="NCBIfam" id="NF009557">
    <property type="entry name" value="PRK13009.1"/>
    <property type="match status" value="1"/>
</dbReference>
<dbReference type="PANTHER" id="PTHR43808">
    <property type="entry name" value="ACETYLORNITHINE DEACETYLASE"/>
    <property type="match status" value="1"/>
</dbReference>
<dbReference type="PANTHER" id="PTHR43808:SF31">
    <property type="entry name" value="N-ACETYL-L-CITRULLINE DEACETYLASE"/>
    <property type="match status" value="1"/>
</dbReference>
<dbReference type="Pfam" id="PF07687">
    <property type="entry name" value="M20_dimer"/>
    <property type="match status" value="1"/>
</dbReference>
<dbReference type="Pfam" id="PF01546">
    <property type="entry name" value="Peptidase_M20"/>
    <property type="match status" value="1"/>
</dbReference>
<dbReference type="SUPFAM" id="SSF55031">
    <property type="entry name" value="Bacterial exopeptidase dimerisation domain"/>
    <property type="match status" value="1"/>
</dbReference>
<dbReference type="SUPFAM" id="SSF53187">
    <property type="entry name" value="Zn-dependent exopeptidases"/>
    <property type="match status" value="1"/>
</dbReference>
<protein>
    <recommendedName>
        <fullName evidence="1">Succinyl-diaminopimelate desuccinylase</fullName>
        <shortName evidence="1">SDAP desuccinylase</shortName>
        <ecNumber evidence="1">3.5.1.18</ecNumber>
    </recommendedName>
    <alternativeName>
        <fullName evidence="1">N-succinyl-LL-2,6-diaminoheptanedioate amidohydrolase</fullName>
    </alternativeName>
</protein>
<evidence type="ECO:0000255" key="1">
    <source>
        <dbReference type="HAMAP-Rule" id="MF_01690"/>
    </source>
</evidence>
<name>DAPE_CUPTR</name>
<sequence>MNPTLALTEDLIRRRSVTPADEGCQAILETRLKAIGFDCEALVSGPDDFRVTNLWAVKRGTQGKDGKLLVFAGHTDVVPTGPLEQWHSDPFAPTHRDGKLYGRGAADMKTSIAGFVVAVEEFVKAHPAHAGSIGFLITSDEEGPAHDGTIKVVEALSARGERLDYCVIGEPTSVNALGDMVKNGRRGSLSGKLTVKGIQCHIAYPHLGRNPIHDAAPALAELAAEVWDAGNEYFPPTSWQMSNIHGGTGATNVIPGHVTIDFNFRFSTASTPEGLKARVHAILDRHSLDYTLDWTLGGEPFLTPRGELSEALSSAIKAETGFDTELSTTGGTSDGRFIARICPQVIEFGPPNASIHKIDEHVEVRFIEPLKNVYRGVLERLIA</sequence>
<gene>
    <name evidence="1" type="primary">dapE</name>
    <name type="ordered locus">RALTA_A1705</name>
</gene>
<proteinExistence type="inferred from homology"/>